<keyword id="KW-0240">DNA-directed RNA polymerase</keyword>
<keyword id="KW-0548">Nucleotidyltransferase</keyword>
<keyword id="KW-0804">Transcription</keyword>
<keyword id="KW-0808">Transferase</keyword>
<name>RPOA_CHLPB</name>
<reference key="1">
    <citation type="submission" date="2008-06" db="EMBL/GenBank/DDBJ databases">
        <title>Complete sequence of Chlorobium phaeobacteroides BS1.</title>
        <authorList>
            <consortium name="US DOE Joint Genome Institute"/>
            <person name="Lucas S."/>
            <person name="Copeland A."/>
            <person name="Lapidus A."/>
            <person name="Glavina del Rio T."/>
            <person name="Dalin E."/>
            <person name="Tice H."/>
            <person name="Bruce D."/>
            <person name="Goodwin L."/>
            <person name="Pitluck S."/>
            <person name="Schmutz J."/>
            <person name="Larimer F."/>
            <person name="Land M."/>
            <person name="Hauser L."/>
            <person name="Kyrpides N."/>
            <person name="Ovchinnikova G."/>
            <person name="Li T."/>
            <person name="Liu Z."/>
            <person name="Zhao F."/>
            <person name="Overmann J."/>
            <person name="Bryant D.A."/>
            <person name="Richardson P."/>
        </authorList>
    </citation>
    <scope>NUCLEOTIDE SEQUENCE [LARGE SCALE GENOMIC DNA]</scope>
    <source>
        <strain>BS1</strain>
    </source>
</reference>
<gene>
    <name evidence="1" type="primary">rpoA</name>
    <name type="ordered locus">Cphamn1_2269</name>
</gene>
<evidence type="ECO:0000255" key="1">
    <source>
        <dbReference type="HAMAP-Rule" id="MF_00059"/>
    </source>
</evidence>
<dbReference type="EC" id="2.7.7.6" evidence="1"/>
<dbReference type="EMBL" id="CP001101">
    <property type="protein sequence ID" value="ACE05173.1"/>
    <property type="molecule type" value="Genomic_DNA"/>
</dbReference>
<dbReference type="SMR" id="B3EP34"/>
<dbReference type="STRING" id="331678.Cphamn1_2269"/>
<dbReference type="KEGG" id="cpb:Cphamn1_2269"/>
<dbReference type="eggNOG" id="COG0202">
    <property type="taxonomic scope" value="Bacteria"/>
</dbReference>
<dbReference type="HOGENOM" id="CLU_053084_0_1_10"/>
<dbReference type="OrthoDB" id="9805706at2"/>
<dbReference type="GO" id="GO:0005737">
    <property type="term" value="C:cytoplasm"/>
    <property type="evidence" value="ECO:0007669"/>
    <property type="project" value="UniProtKB-ARBA"/>
</dbReference>
<dbReference type="GO" id="GO:0000428">
    <property type="term" value="C:DNA-directed RNA polymerase complex"/>
    <property type="evidence" value="ECO:0007669"/>
    <property type="project" value="UniProtKB-KW"/>
</dbReference>
<dbReference type="GO" id="GO:0003677">
    <property type="term" value="F:DNA binding"/>
    <property type="evidence" value="ECO:0007669"/>
    <property type="project" value="UniProtKB-UniRule"/>
</dbReference>
<dbReference type="GO" id="GO:0003899">
    <property type="term" value="F:DNA-directed RNA polymerase activity"/>
    <property type="evidence" value="ECO:0007669"/>
    <property type="project" value="UniProtKB-UniRule"/>
</dbReference>
<dbReference type="GO" id="GO:0046983">
    <property type="term" value="F:protein dimerization activity"/>
    <property type="evidence" value="ECO:0007669"/>
    <property type="project" value="InterPro"/>
</dbReference>
<dbReference type="GO" id="GO:0006351">
    <property type="term" value="P:DNA-templated transcription"/>
    <property type="evidence" value="ECO:0007669"/>
    <property type="project" value="UniProtKB-UniRule"/>
</dbReference>
<dbReference type="CDD" id="cd06928">
    <property type="entry name" value="RNAP_alpha_NTD"/>
    <property type="match status" value="1"/>
</dbReference>
<dbReference type="FunFam" id="2.170.120.12:FF:000001">
    <property type="entry name" value="DNA-directed RNA polymerase subunit alpha"/>
    <property type="match status" value="1"/>
</dbReference>
<dbReference type="Gene3D" id="1.10.150.20">
    <property type="entry name" value="5' to 3' exonuclease, C-terminal subdomain"/>
    <property type="match status" value="1"/>
</dbReference>
<dbReference type="Gene3D" id="2.170.120.12">
    <property type="entry name" value="DNA-directed RNA polymerase, insert domain"/>
    <property type="match status" value="1"/>
</dbReference>
<dbReference type="Gene3D" id="3.30.1360.10">
    <property type="entry name" value="RNA polymerase, RBP11-like subunit"/>
    <property type="match status" value="1"/>
</dbReference>
<dbReference type="HAMAP" id="MF_00059">
    <property type="entry name" value="RNApol_bact_RpoA"/>
    <property type="match status" value="1"/>
</dbReference>
<dbReference type="InterPro" id="IPR011262">
    <property type="entry name" value="DNA-dir_RNA_pol_insert"/>
</dbReference>
<dbReference type="InterPro" id="IPR011263">
    <property type="entry name" value="DNA-dir_RNA_pol_RpoA/D/Rpb3"/>
</dbReference>
<dbReference type="InterPro" id="IPR011773">
    <property type="entry name" value="DNA-dir_RpoA"/>
</dbReference>
<dbReference type="InterPro" id="IPR036603">
    <property type="entry name" value="RBP11-like"/>
</dbReference>
<dbReference type="InterPro" id="IPR011260">
    <property type="entry name" value="RNAP_asu_C"/>
</dbReference>
<dbReference type="InterPro" id="IPR036643">
    <property type="entry name" value="RNApol_insert_sf"/>
</dbReference>
<dbReference type="NCBIfam" id="NF003513">
    <property type="entry name" value="PRK05182.1-2"/>
    <property type="match status" value="1"/>
</dbReference>
<dbReference type="NCBIfam" id="NF003516">
    <property type="entry name" value="PRK05182.2-2"/>
    <property type="match status" value="1"/>
</dbReference>
<dbReference type="NCBIfam" id="NF003519">
    <property type="entry name" value="PRK05182.2-5"/>
    <property type="match status" value="1"/>
</dbReference>
<dbReference type="NCBIfam" id="TIGR02027">
    <property type="entry name" value="rpoA"/>
    <property type="match status" value="1"/>
</dbReference>
<dbReference type="Pfam" id="PF01000">
    <property type="entry name" value="RNA_pol_A_bac"/>
    <property type="match status" value="1"/>
</dbReference>
<dbReference type="Pfam" id="PF03118">
    <property type="entry name" value="RNA_pol_A_CTD"/>
    <property type="match status" value="1"/>
</dbReference>
<dbReference type="Pfam" id="PF01193">
    <property type="entry name" value="RNA_pol_L"/>
    <property type="match status" value="1"/>
</dbReference>
<dbReference type="SMART" id="SM00662">
    <property type="entry name" value="RPOLD"/>
    <property type="match status" value="1"/>
</dbReference>
<dbReference type="SUPFAM" id="SSF47789">
    <property type="entry name" value="C-terminal domain of RNA polymerase alpha subunit"/>
    <property type="match status" value="1"/>
</dbReference>
<dbReference type="SUPFAM" id="SSF56553">
    <property type="entry name" value="Insert subdomain of RNA polymerase alpha subunit"/>
    <property type="match status" value="1"/>
</dbReference>
<dbReference type="SUPFAM" id="SSF55257">
    <property type="entry name" value="RBP11-like subunits of RNA polymerase"/>
    <property type="match status" value="1"/>
</dbReference>
<sequence length="328" mass="36823">MIYQMQMPEKIDVDEGTHNDKNGIFIAQPLERGYGVTLGNAMRRVLLASLPGTAITGIKIDGVFHEFSAIDGVREDVPDIILNLKKVRFRSSTKRSCKTTVTVDGPADVTAGDIVAQEGEFEVLNTDLHIATVNEGSRLSMDVYIGRGRGYVPAEDNRGDGMPLGFIAIDSIFTPIKNVKFSVENTRVGQRTDYEKMILDVETDGSVSPDDSISLAGKIINEHVSLFANFSPTDEEFTEEEYKQQDDEFENMRKMLLTRIEDLDLSVRSHNCLRLAEIDTLGDLVSRKEDELLTYKNFGKKSLTELKEQLEKFELKFGMDITKYQMKG</sequence>
<comment type="function">
    <text evidence="1">DNA-dependent RNA polymerase catalyzes the transcription of DNA into RNA using the four ribonucleoside triphosphates as substrates.</text>
</comment>
<comment type="catalytic activity">
    <reaction evidence="1">
        <text>RNA(n) + a ribonucleoside 5'-triphosphate = RNA(n+1) + diphosphate</text>
        <dbReference type="Rhea" id="RHEA:21248"/>
        <dbReference type="Rhea" id="RHEA-COMP:14527"/>
        <dbReference type="Rhea" id="RHEA-COMP:17342"/>
        <dbReference type="ChEBI" id="CHEBI:33019"/>
        <dbReference type="ChEBI" id="CHEBI:61557"/>
        <dbReference type="ChEBI" id="CHEBI:140395"/>
        <dbReference type="EC" id="2.7.7.6"/>
    </reaction>
</comment>
<comment type="subunit">
    <text evidence="1">Homodimer. The RNAP catalytic core consists of 2 alpha, 1 beta, 1 beta' and 1 omega subunit. When a sigma factor is associated with the core the holoenzyme is formed, which can initiate transcription.</text>
</comment>
<comment type="domain">
    <text evidence="1">The N-terminal domain is essential for RNAP assembly and basal transcription, whereas the C-terminal domain is involved in interaction with transcriptional regulators and with upstream promoter elements.</text>
</comment>
<comment type="similarity">
    <text evidence="1">Belongs to the RNA polymerase alpha chain family.</text>
</comment>
<protein>
    <recommendedName>
        <fullName evidence="1">DNA-directed RNA polymerase subunit alpha</fullName>
        <shortName evidence="1">RNAP subunit alpha</shortName>
        <ecNumber evidence="1">2.7.7.6</ecNumber>
    </recommendedName>
    <alternativeName>
        <fullName evidence="1">RNA polymerase subunit alpha</fullName>
    </alternativeName>
    <alternativeName>
        <fullName evidence="1">Transcriptase subunit alpha</fullName>
    </alternativeName>
</protein>
<feature type="chain" id="PRO_1000091934" description="DNA-directed RNA polymerase subunit alpha">
    <location>
        <begin position="1"/>
        <end position="328"/>
    </location>
</feature>
<feature type="region of interest" description="Alpha N-terminal domain (alpha-NTD)" evidence="1">
    <location>
        <begin position="1"/>
        <end position="231"/>
    </location>
</feature>
<feature type="region of interest" description="Alpha C-terminal domain (alpha-CTD)" evidence="1">
    <location>
        <begin position="252"/>
        <end position="328"/>
    </location>
</feature>
<organism>
    <name type="scientific">Chlorobium phaeobacteroides (strain BS1)</name>
    <dbReference type="NCBI Taxonomy" id="331678"/>
    <lineage>
        <taxon>Bacteria</taxon>
        <taxon>Pseudomonadati</taxon>
        <taxon>Chlorobiota</taxon>
        <taxon>Chlorobiia</taxon>
        <taxon>Chlorobiales</taxon>
        <taxon>Chlorobiaceae</taxon>
        <taxon>Chlorobium/Pelodictyon group</taxon>
        <taxon>Chlorobium</taxon>
    </lineage>
</organism>
<proteinExistence type="inferred from homology"/>
<accession>B3EP34</accession>